<proteinExistence type="inferred from homology"/>
<organism>
    <name type="scientific">Chlorobaculum parvum (strain DSM 263 / NCIMB 8327)</name>
    <name type="common">Chlorobium vibrioforme subsp. thiosulfatophilum</name>
    <dbReference type="NCBI Taxonomy" id="517417"/>
    <lineage>
        <taxon>Bacteria</taxon>
        <taxon>Pseudomonadati</taxon>
        <taxon>Chlorobiota</taxon>
        <taxon>Chlorobiia</taxon>
        <taxon>Chlorobiales</taxon>
        <taxon>Chlorobiaceae</taxon>
        <taxon>Chlorobaculum</taxon>
    </lineage>
</organism>
<keyword id="KW-0113">Calvin cycle</keyword>
<keyword id="KW-0119">Carbohydrate metabolism</keyword>
<keyword id="KW-0963">Cytoplasm</keyword>
<keyword id="KW-0378">Hydrolase</keyword>
<keyword id="KW-0460">Magnesium</keyword>
<keyword id="KW-0479">Metal-binding</keyword>
<gene>
    <name evidence="1" type="primary">fbp</name>
    <name type="ordered locus">Cpar_1682</name>
</gene>
<name>F16PA_CHLP8</name>
<dbReference type="EC" id="3.1.3.11" evidence="1"/>
<dbReference type="EMBL" id="CP001099">
    <property type="protein sequence ID" value="ACF12076.1"/>
    <property type="molecule type" value="Genomic_DNA"/>
</dbReference>
<dbReference type="RefSeq" id="WP_012502909.1">
    <property type="nucleotide sequence ID" value="NC_011027.1"/>
</dbReference>
<dbReference type="SMR" id="B3QQ73"/>
<dbReference type="STRING" id="517417.Cpar_1682"/>
<dbReference type="KEGG" id="cpc:Cpar_1682"/>
<dbReference type="eggNOG" id="COG0158">
    <property type="taxonomic scope" value="Bacteria"/>
</dbReference>
<dbReference type="HOGENOM" id="CLU_039977_2_2_10"/>
<dbReference type="OrthoDB" id="9806756at2"/>
<dbReference type="UniPathway" id="UPA00116"/>
<dbReference type="Proteomes" id="UP000008811">
    <property type="component" value="Chromosome"/>
</dbReference>
<dbReference type="GO" id="GO:0005829">
    <property type="term" value="C:cytosol"/>
    <property type="evidence" value="ECO:0007669"/>
    <property type="project" value="TreeGrafter"/>
</dbReference>
<dbReference type="GO" id="GO:0042132">
    <property type="term" value="F:fructose 1,6-bisphosphate 1-phosphatase activity"/>
    <property type="evidence" value="ECO:0007669"/>
    <property type="project" value="UniProtKB-UniRule"/>
</dbReference>
<dbReference type="GO" id="GO:0000287">
    <property type="term" value="F:magnesium ion binding"/>
    <property type="evidence" value="ECO:0007669"/>
    <property type="project" value="UniProtKB-UniRule"/>
</dbReference>
<dbReference type="GO" id="GO:0030388">
    <property type="term" value="P:fructose 1,6-bisphosphate metabolic process"/>
    <property type="evidence" value="ECO:0007669"/>
    <property type="project" value="TreeGrafter"/>
</dbReference>
<dbReference type="GO" id="GO:0006002">
    <property type="term" value="P:fructose 6-phosphate metabolic process"/>
    <property type="evidence" value="ECO:0007669"/>
    <property type="project" value="TreeGrafter"/>
</dbReference>
<dbReference type="GO" id="GO:0006000">
    <property type="term" value="P:fructose metabolic process"/>
    <property type="evidence" value="ECO:0007669"/>
    <property type="project" value="TreeGrafter"/>
</dbReference>
<dbReference type="GO" id="GO:0006094">
    <property type="term" value="P:gluconeogenesis"/>
    <property type="evidence" value="ECO:0007669"/>
    <property type="project" value="UniProtKB-UniRule"/>
</dbReference>
<dbReference type="GO" id="GO:0019253">
    <property type="term" value="P:reductive pentose-phosphate cycle"/>
    <property type="evidence" value="ECO:0007669"/>
    <property type="project" value="UniProtKB-UniRule"/>
</dbReference>
<dbReference type="GO" id="GO:0005986">
    <property type="term" value="P:sucrose biosynthetic process"/>
    <property type="evidence" value="ECO:0007669"/>
    <property type="project" value="TreeGrafter"/>
</dbReference>
<dbReference type="CDD" id="cd00354">
    <property type="entry name" value="FBPase"/>
    <property type="match status" value="1"/>
</dbReference>
<dbReference type="FunFam" id="3.30.540.10:FF:000002">
    <property type="entry name" value="Fructose-1,6-bisphosphatase class 1"/>
    <property type="match status" value="1"/>
</dbReference>
<dbReference type="FunFam" id="3.40.190.80:FF:000001">
    <property type="entry name" value="Fructose-1,6-bisphosphatase class 1"/>
    <property type="match status" value="1"/>
</dbReference>
<dbReference type="Gene3D" id="3.40.190.80">
    <property type="match status" value="1"/>
</dbReference>
<dbReference type="Gene3D" id="3.30.540.10">
    <property type="entry name" value="Fructose-1,6-Bisphosphatase, subunit A, domain 1"/>
    <property type="match status" value="1"/>
</dbReference>
<dbReference type="HAMAP" id="MF_01855">
    <property type="entry name" value="FBPase_class1"/>
    <property type="match status" value="1"/>
</dbReference>
<dbReference type="InterPro" id="IPR044015">
    <property type="entry name" value="FBPase_C_dom"/>
</dbReference>
<dbReference type="InterPro" id="IPR000146">
    <property type="entry name" value="FBPase_class-1"/>
</dbReference>
<dbReference type="InterPro" id="IPR033391">
    <property type="entry name" value="FBPase_N"/>
</dbReference>
<dbReference type="InterPro" id="IPR028343">
    <property type="entry name" value="FBPtase"/>
</dbReference>
<dbReference type="NCBIfam" id="NF006778">
    <property type="entry name" value="PRK09293.1-1"/>
    <property type="match status" value="1"/>
</dbReference>
<dbReference type="NCBIfam" id="NF006779">
    <property type="entry name" value="PRK09293.1-3"/>
    <property type="match status" value="1"/>
</dbReference>
<dbReference type="PANTHER" id="PTHR11556">
    <property type="entry name" value="FRUCTOSE-1,6-BISPHOSPHATASE-RELATED"/>
    <property type="match status" value="1"/>
</dbReference>
<dbReference type="PANTHER" id="PTHR11556:SF35">
    <property type="entry name" value="SEDOHEPTULOSE-1,7-BISPHOSPHATASE, CHLOROPLASTIC"/>
    <property type="match status" value="1"/>
</dbReference>
<dbReference type="Pfam" id="PF00316">
    <property type="entry name" value="FBPase"/>
    <property type="match status" value="1"/>
</dbReference>
<dbReference type="Pfam" id="PF18913">
    <property type="entry name" value="FBPase_C"/>
    <property type="match status" value="1"/>
</dbReference>
<dbReference type="PIRSF" id="PIRSF500210">
    <property type="entry name" value="FBPtase"/>
    <property type="match status" value="1"/>
</dbReference>
<dbReference type="PIRSF" id="PIRSF000904">
    <property type="entry name" value="FBPtase_SBPase"/>
    <property type="match status" value="1"/>
</dbReference>
<dbReference type="PRINTS" id="PR00115">
    <property type="entry name" value="F16BPHPHTASE"/>
</dbReference>
<dbReference type="SUPFAM" id="SSF56655">
    <property type="entry name" value="Carbohydrate phosphatase"/>
    <property type="match status" value="1"/>
</dbReference>
<reference key="1">
    <citation type="submission" date="2008-06" db="EMBL/GenBank/DDBJ databases">
        <title>Complete sequence of Chlorobaculum parvum NCIB 8327.</title>
        <authorList>
            <consortium name="US DOE Joint Genome Institute"/>
            <person name="Lucas S."/>
            <person name="Copeland A."/>
            <person name="Lapidus A."/>
            <person name="Glavina del Rio T."/>
            <person name="Dalin E."/>
            <person name="Tice H."/>
            <person name="Bruce D."/>
            <person name="Goodwin L."/>
            <person name="Pitluck S."/>
            <person name="Schmutz J."/>
            <person name="Larimer F."/>
            <person name="Land M."/>
            <person name="Hauser L."/>
            <person name="Kyrpides N."/>
            <person name="Mikhailova N."/>
            <person name="Zhao F."/>
            <person name="Li T."/>
            <person name="Liu Z."/>
            <person name="Overmann J."/>
            <person name="Bryant D.A."/>
            <person name="Richardson P."/>
        </authorList>
    </citation>
    <scope>NUCLEOTIDE SEQUENCE [LARGE SCALE GENOMIC DNA]</scope>
    <source>
        <strain>DSM 263 / NCIMB 8327</strain>
    </source>
</reference>
<protein>
    <recommendedName>
        <fullName evidence="1">Fructose-1,6-bisphosphatase class 1</fullName>
        <shortName evidence="1">FBPase class 1</shortName>
        <ecNumber evidence="1">3.1.3.11</ecNumber>
    </recommendedName>
    <alternativeName>
        <fullName evidence="1">D-fructose-1,6-bisphosphate 1-phosphohydrolase class 1</fullName>
    </alternativeName>
</protein>
<sequence length="333" mass="37164">MNKLTTIESHFLQQQKLYPEINSEVTGLLNDVAFAAKLVRREVVRAGLADILGLAGSTNVQGEEVKKLDLFANERLINAIGQHGRFAIMGSEENEETITPPKFESGEYVLLFDPLDGSSNIDVNVSVGTIFSIYRLKSDNPSQASIEDCLQKGADQVAAGYVIYGSSVMLVYTTGHGVHGFTFDQTVGEFLLSHENITTPEHGKYYSVNEGSWNEFHDGTKLFLDYLKEEDKATGRPYSTRYIGSFVADFHRNLLTGGVFIYPATKKHKNGKLRLMYEANPMAFICEQAGGRATDGHRRILDIEPVELHQRTPLYIGSKNDVLIAEEFEQDKR</sequence>
<evidence type="ECO:0000255" key="1">
    <source>
        <dbReference type="HAMAP-Rule" id="MF_01855"/>
    </source>
</evidence>
<feature type="chain" id="PRO_0000364520" description="Fructose-1,6-bisphosphatase class 1">
    <location>
        <begin position="1"/>
        <end position="333"/>
    </location>
</feature>
<feature type="binding site" evidence="1">
    <location>
        <position position="92"/>
    </location>
    <ligand>
        <name>Mg(2+)</name>
        <dbReference type="ChEBI" id="CHEBI:18420"/>
        <label>1</label>
    </ligand>
</feature>
<feature type="binding site" evidence="1">
    <location>
        <position position="113"/>
    </location>
    <ligand>
        <name>Mg(2+)</name>
        <dbReference type="ChEBI" id="CHEBI:18420"/>
        <label>1</label>
    </ligand>
</feature>
<feature type="binding site" evidence="1">
    <location>
        <position position="113"/>
    </location>
    <ligand>
        <name>Mg(2+)</name>
        <dbReference type="ChEBI" id="CHEBI:18420"/>
        <label>2</label>
    </ligand>
</feature>
<feature type="binding site" evidence="1">
    <location>
        <position position="115"/>
    </location>
    <ligand>
        <name>Mg(2+)</name>
        <dbReference type="ChEBI" id="CHEBI:18420"/>
        <label>1</label>
    </ligand>
</feature>
<feature type="binding site" evidence="1">
    <location>
        <begin position="116"/>
        <end position="119"/>
    </location>
    <ligand>
        <name>substrate</name>
    </ligand>
</feature>
<feature type="binding site" evidence="1">
    <location>
        <position position="116"/>
    </location>
    <ligand>
        <name>Mg(2+)</name>
        <dbReference type="ChEBI" id="CHEBI:18420"/>
        <label>2</label>
    </ligand>
</feature>
<feature type="binding site" evidence="1">
    <location>
        <position position="209"/>
    </location>
    <ligand>
        <name>substrate</name>
    </ligand>
</feature>
<feature type="binding site" evidence="1">
    <location>
        <position position="242"/>
    </location>
    <ligand>
        <name>substrate</name>
    </ligand>
</feature>
<feature type="binding site" evidence="1">
    <location>
        <position position="272"/>
    </location>
    <ligand>
        <name>substrate</name>
    </ligand>
</feature>
<feature type="binding site" evidence="1">
    <location>
        <position position="278"/>
    </location>
    <ligand>
        <name>Mg(2+)</name>
        <dbReference type="ChEBI" id="CHEBI:18420"/>
        <label>2</label>
    </ligand>
</feature>
<accession>B3QQ73</accession>
<comment type="catalytic activity">
    <reaction evidence="1">
        <text>beta-D-fructose 1,6-bisphosphate + H2O = beta-D-fructose 6-phosphate + phosphate</text>
        <dbReference type="Rhea" id="RHEA:11064"/>
        <dbReference type="ChEBI" id="CHEBI:15377"/>
        <dbReference type="ChEBI" id="CHEBI:32966"/>
        <dbReference type="ChEBI" id="CHEBI:43474"/>
        <dbReference type="ChEBI" id="CHEBI:57634"/>
        <dbReference type="EC" id="3.1.3.11"/>
    </reaction>
</comment>
<comment type="cofactor">
    <cofactor evidence="1">
        <name>Mg(2+)</name>
        <dbReference type="ChEBI" id="CHEBI:18420"/>
    </cofactor>
    <text evidence="1">Binds 2 magnesium ions per subunit.</text>
</comment>
<comment type="pathway">
    <text evidence="1">Carbohydrate biosynthesis; Calvin cycle.</text>
</comment>
<comment type="subunit">
    <text evidence="1">Homotetramer.</text>
</comment>
<comment type="subcellular location">
    <subcellularLocation>
        <location evidence="1">Cytoplasm</location>
    </subcellularLocation>
</comment>
<comment type="similarity">
    <text evidence="1">Belongs to the FBPase class 1 family.</text>
</comment>